<protein>
    <recommendedName>
        <fullName>Bacteriocin leucocin-B</fullName>
    </recommendedName>
</protein>
<keyword id="KW-0044">Antibiotic</keyword>
<keyword id="KW-0929">Antimicrobial</keyword>
<keyword id="KW-0078">Bacteriocin</keyword>
<keyword id="KW-0903">Direct protein sequencing</keyword>
<keyword id="KW-0964">Secreted</keyword>
<name>LCCB_LEUME</name>
<dbReference type="GO" id="GO:0005576">
    <property type="term" value="C:extracellular region"/>
    <property type="evidence" value="ECO:0007669"/>
    <property type="project" value="UniProtKB-SubCell"/>
</dbReference>
<dbReference type="GO" id="GO:0042742">
    <property type="term" value="P:defense response to bacterium"/>
    <property type="evidence" value="ECO:0007669"/>
    <property type="project" value="UniProtKB-KW"/>
</dbReference>
<dbReference type="GO" id="GO:0031640">
    <property type="term" value="P:killing of cells of another organism"/>
    <property type="evidence" value="ECO:0007669"/>
    <property type="project" value="UniProtKB-KW"/>
</dbReference>
<organism>
    <name type="scientific">Leuconostoc mesenteroides</name>
    <dbReference type="NCBI Taxonomy" id="1245"/>
    <lineage>
        <taxon>Bacteria</taxon>
        <taxon>Bacillati</taxon>
        <taxon>Bacillota</taxon>
        <taxon>Bacilli</taxon>
        <taxon>Lactobacillales</taxon>
        <taxon>Lactobacillaceae</taxon>
        <taxon>Leuconostoc</taxon>
    </lineage>
</organism>
<sequence>KGKGFWSWASKATSWLTGPQQPGSPLLKKHR</sequence>
<feature type="peptide" id="PRO_0000044639" description="Bacteriocin leucocin-B">
    <location>
        <begin position="1"/>
        <end position="31"/>
    </location>
</feature>
<comment type="function">
    <text>Inhibits a wide spectrum of lactic acid bacteria.</text>
</comment>
<comment type="subcellular location">
    <subcellularLocation>
        <location>Secreted</location>
    </subcellularLocation>
</comment>
<proteinExistence type="evidence at protein level"/>
<reference key="1">
    <citation type="journal article" date="1998" name="Microbiology">
        <title>Sequence and structural relationships of leucocins A-, B- and C-TA33a from Leuconostoc mesenteroides TA33a.</title>
        <authorList>
            <person name="Papathanasopoulos M.A."/>
            <person name="Dykes G.A."/>
            <person name="Revol-Junelles A.-M."/>
            <person name="Delfour A."/>
            <person name="von Holy A."/>
            <person name="Hastings J.W."/>
        </authorList>
    </citation>
    <scope>PROTEIN SEQUENCE</scope>
    <source>
        <strain>TA33a</strain>
    </source>
</reference>
<accession>P81052</accession>